<sequence length="316" mass="34703">MKRNTRKIAIIGTGLVGSSCAYSIVNQGICEELLLIDINHERAVGEAMDLSHCINFTNTRTKVYAGSYEDCKDMDIVIITAGPAPKPGQSRLDTLGASAKIMESVVGGVMESGFDGIFLLASNPVDIITYQVWKLSGLPRNRVIGTGTSLDSSRLRTILSEMLHVDPRSIHGYSLGEHGDSQMVAWSHVTVGGKPILQILEEKKDQFGEIDLDEIVEKTAKAGWEIYKRKGTTYYGIGNSLAYIASSIFNDDYRVIAVSAILDGEYGEYDLCTGVPAIITRDGIKEIVELNLTEDEESRFAKSNDILRDYMKTIGY</sequence>
<gene>
    <name evidence="1" type="primary">ldh3</name>
    <name type="ordered locus">BCE_5135</name>
</gene>
<reference key="1">
    <citation type="journal article" date="2004" name="Nucleic Acids Res.">
        <title>The genome sequence of Bacillus cereus ATCC 10987 reveals metabolic adaptations and a large plasmid related to Bacillus anthracis pXO1.</title>
        <authorList>
            <person name="Rasko D.A."/>
            <person name="Ravel J."/>
            <person name="Oekstad O.A."/>
            <person name="Helgason E."/>
            <person name="Cer R.Z."/>
            <person name="Jiang L."/>
            <person name="Shores K.A."/>
            <person name="Fouts D.E."/>
            <person name="Tourasse N.J."/>
            <person name="Angiuoli S.V."/>
            <person name="Kolonay J.F."/>
            <person name="Nelson W.C."/>
            <person name="Kolstoe A.-B."/>
            <person name="Fraser C.M."/>
            <person name="Read T.D."/>
        </authorList>
    </citation>
    <scope>NUCLEOTIDE SEQUENCE [LARGE SCALE GENOMIC DNA]</scope>
    <source>
        <strain>ATCC 10987 / NRS 248</strain>
    </source>
</reference>
<keyword id="KW-0021">Allosteric enzyme</keyword>
<keyword id="KW-0963">Cytoplasm</keyword>
<keyword id="KW-0520">NAD</keyword>
<keyword id="KW-0560">Oxidoreductase</keyword>
<feature type="chain" id="PRO_0000168320" description="L-lactate dehydrogenase 3">
    <location>
        <begin position="1"/>
        <end position="316"/>
    </location>
</feature>
<feature type="active site" description="Proton acceptor" evidence="1">
    <location>
        <position position="178"/>
    </location>
</feature>
<feature type="binding site" evidence="1">
    <location>
        <position position="16"/>
    </location>
    <ligand>
        <name>NAD(+)</name>
        <dbReference type="ChEBI" id="CHEBI:57540"/>
    </ligand>
</feature>
<feature type="binding site" evidence="1">
    <location>
        <position position="37"/>
    </location>
    <ligand>
        <name>NAD(+)</name>
        <dbReference type="ChEBI" id="CHEBI:57540"/>
    </ligand>
</feature>
<feature type="binding site" evidence="1">
    <location>
        <position position="42"/>
    </location>
    <ligand>
        <name>NAD(+)</name>
        <dbReference type="ChEBI" id="CHEBI:57540"/>
    </ligand>
</feature>
<feature type="binding site" evidence="1">
    <location>
        <position position="68"/>
    </location>
    <ligand>
        <name>NAD(+)</name>
        <dbReference type="ChEBI" id="CHEBI:57540"/>
    </ligand>
</feature>
<feature type="binding site" evidence="1">
    <location>
        <position position="91"/>
    </location>
    <ligand>
        <name>substrate</name>
    </ligand>
</feature>
<feature type="binding site" evidence="1">
    <location>
        <position position="104"/>
    </location>
    <ligand>
        <name>NAD(+)</name>
        <dbReference type="ChEBI" id="CHEBI:57540"/>
    </ligand>
</feature>
<feature type="binding site" evidence="1">
    <location>
        <begin position="121"/>
        <end position="123"/>
    </location>
    <ligand>
        <name>NAD(+)</name>
        <dbReference type="ChEBI" id="CHEBI:57540"/>
    </ligand>
</feature>
<feature type="binding site" evidence="1">
    <location>
        <begin position="123"/>
        <end position="126"/>
    </location>
    <ligand>
        <name>substrate</name>
    </ligand>
</feature>
<feature type="binding site" evidence="1">
    <location>
        <position position="146"/>
    </location>
    <ligand>
        <name>NAD(+)</name>
        <dbReference type="ChEBI" id="CHEBI:57540"/>
    </ligand>
</feature>
<feature type="binding site" evidence="1">
    <location>
        <begin position="151"/>
        <end position="154"/>
    </location>
    <ligand>
        <name>substrate</name>
    </ligand>
</feature>
<feature type="binding site" evidence="1">
    <location>
        <position position="156"/>
    </location>
    <ligand>
        <name>beta-D-fructose 1,6-bisphosphate</name>
        <dbReference type="ChEBI" id="CHEBI:32966"/>
        <note>allosteric activator</note>
    </ligand>
</feature>
<feature type="binding site" evidence="1">
    <location>
        <position position="171"/>
    </location>
    <ligand>
        <name>beta-D-fructose 1,6-bisphosphate</name>
        <dbReference type="ChEBI" id="CHEBI:32966"/>
        <note>allosteric activator</note>
    </ligand>
</feature>
<feature type="binding site" evidence="1">
    <location>
        <position position="233"/>
    </location>
    <ligand>
        <name>substrate</name>
    </ligand>
</feature>
<evidence type="ECO:0000255" key="1">
    <source>
        <dbReference type="HAMAP-Rule" id="MF_00488"/>
    </source>
</evidence>
<name>LDH3_BACC1</name>
<organism>
    <name type="scientific">Bacillus cereus (strain ATCC 10987 / NRS 248)</name>
    <dbReference type="NCBI Taxonomy" id="222523"/>
    <lineage>
        <taxon>Bacteria</taxon>
        <taxon>Bacillati</taxon>
        <taxon>Bacillota</taxon>
        <taxon>Bacilli</taxon>
        <taxon>Bacillales</taxon>
        <taxon>Bacillaceae</taxon>
        <taxon>Bacillus</taxon>
        <taxon>Bacillus cereus group</taxon>
    </lineage>
</organism>
<dbReference type="EC" id="1.1.1.27" evidence="1"/>
<dbReference type="EMBL" id="AE017194">
    <property type="protein sequence ID" value="AAS44036.1"/>
    <property type="molecule type" value="Genomic_DNA"/>
</dbReference>
<dbReference type="SMR" id="P62049"/>
<dbReference type="KEGG" id="bca:BCE_5135"/>
<dbReference type="HOGENOM" id="CLU_045401_1_1_9"/>
<dbReference type="UniPathway" id="UPA00554">
    <property type="reaction ID" value="UER00611"/>
</dbReference>
<dbReference type="Proteomes" id="UP000002527">
    <property type="component" value="Chromosome"/>
</dbReference>
<dbReference type="GO" id="GO:0005737">
    <property type="term" value="C:cytoplasm"/>
    <property type="evidence" value="ECO:0007669"/>
    <property type="project" value="UniProtKB-SubCell"/>
</dbReference>
<dbReference type="GO" id="GO:0004459">
    <property type="term" value="F:L-lactate dehydrogenase activity"/>
    <property type="evidence" value="ECO:0007669"/>
    <property type="project" value="UniProtKB-UniRule"/>
</dbReference>
<dbReference type="GO" id="GO:0006096">
    <property type="term" value="P:glycolytic process"/>
    <property type="evidence" value="ECO:0007669"/>
    <property type="project" value="UniProtKB-UniRule"/>
</dbReference>
<dbReference type="GO" id="GO:0006089">
    <property type="term" value="P:lactate metabolic process"/>
    <property type="evidence" value="ECO:0007669"/>
    <property type="project" value="TreeGrafter"/>
</dbReference>
<dbReference type="CDD" id="cd05291">
    <property type="entry name" value="HicDH_like"/>
    <property type="match status" value="1"/>
</dbReference>
<dbReference type="FunFam" id="3.90.110.10:FF:000005">
    <property type="entry name" value="L-lactate dehydrogenase"/>
    <property type="match status" value="1"/>
</dbReference>
<dbReference type="FunFam" id="3.40.50.720:FF:000018">
    <property type="entry name" value="Malate dehydrogenase"/>
    <property type="match status" value="1"/>
</dbReference>
<dbReference type="Gene3D" id="3.90.110.10">
    <property type="entry name" value="Lactate dehydrogenase/glycoside hydrolase, family 4, C-terminal"/>
    <property type="match status" value="1"/>
</dbReference>
<dbReference type="Gene3D" id="3.40.50.720">
    <property type="entry name" value="NAD(P)-binding Rossmann-like Domain"/>
    <property type="match status" value="1"/>
</dbReference>
<dbReference type="HAMAP" id="MF_00488">
    <property type="entry name" value="Lactate_dehydrog"/>
    <property type="match status" value="1"/>
</dbReference>
<dbReference type="InterPro" id="IPR001557">
    <property type="entry name" value="L-lactate/malate_DH"/>
</dbReference>
<dbReference type="InterPro" id="IPR011304">
    <property type="entry name" value="L-lactate_DH"/>
</dbReference>
<dbReference type="InterPro" id="IPR018177">
    <property type="entry name" value="L-lactate_DH_AS"/>
</dbReference>
<dbReference type="InterPro" id="IPR022383">
    <property type="entry name" value="Lactate/malate_DH_C"/>
</dbReference>
<dbReference type="InterPro" id="IPR001236">
    <property type="entry name" value="Lactate/malate_DH_N"/>
</dbReference>
<dbReference type="InterPro" id="IPR015955">
    <property type="entry name" value="Lactate_DH/Glyco_Ohase_4_C"/>
</dbReference>
<dbReference type="InterPro" id="IPR036291">
    <property type="entry name" value="NAD(P)-bd_dom_sf"/>
</dbReference>
<dbReference type="NCBIfam" id="TIGR01771">
    <property type="entry name" value="L-LDH-NAD"/>
    <property type="match status" value="1"/>
</dbReference>
<dbReference type="NCBIfam" id="NF000824">
    <property type="entry name" value="PRK00066.1"/>
    <property type="match status" value="1"/>
</dbReference>
<dbReference type="NCBIfam" id="NF004863">
    <property type="entry name" value="PRK06223.1"/>
    <property type="match status" value="1"/>
</dbReference>
<dbReference type="PANTHER" id="PTHR43128">
    <property type="entry name" value="L-2-HYDROXYCARBOXYLATE DEHYDROGENASE (NAD(P)(+))"/>
    <property type="match status" value="1"/>
</dbReference>
<dbReference type="PANTHER" id="PTHR43128:SF16">
    <property type="entry name" value="L-LACTATE DEHYDROGENASE"/>
    <property type="match status" value="1"/>
</dbReference>
<dbReference type="Pfam" id="PF02866">
    <property type="entry name" value="Ldh_1_C"/>
    <property type="match status" value="1"/>
</dbReference>
<dbReference type="Pfam" id="PF00056">
    <property type="entry name" value="Ldh_1_N"/>
    <property type="match status" value="1"/>
</dbReference>
<dbReference type="PIRSF" id="PIRSF000102">
    <property type="entry name" value="Lac_mal_DH"/>
    <property type="match status" value="1"/>
</dbReference>
<dbReference type="PRINTS" id="PR00086">
    <property type="entry name" value="LLDHDRGNASE"/>
</dbReference>
<dbReference type="SUPFAM" id="SSF56327">
    <property type="entry name" value="LDH C-terminal domain-like"/>
    <property type="match status" value="1"/>
</dbReference>
<dbReference type="SUPFAM" id="SSF51735">
    <property type="entry name" value="NAD(P)-binding Rossmann-fold domains"/>
    <property type="match status" value="1"/>
</dbReference>
<dbReference type="PROSITE" id="PS00064">
    <property type="entry name" value="L_LDH"/>
    <property type="match status" value="1"/>
</dbReference>
<accession>P62049</accession>
<proteinExistence type="inferred from homology"/>
<protein>
    <recommendedName>
        <fullName evidence="1">L-lactate dehydrogenase 3</fullName>
        <shortName evidence="1">L-LDH 3</shortName>
        <ecNumber evidence="1">1.1.1.27</ecNumber>
    </recommendedName>
</protein>
<comment type="function">
    <text evidence="1">Catalyzes the conversion of lactate to pyruvate.</text>
</comment>
<comment type="catalytic activity">
    <reaction evidence="1">
        <text>(S)-lactate + NAD(+) = pyruvate + NADH + H(+)</text>
        <dbReference type="Rhea" id="RHEA:23444"/>
        <dbReference type="ChEBI" id="CHEBI:15361"/>
        <dbReference type="ChEBI" id="CHEBI:15378"/>
        <dbReference type="ChEBI" id="CHEBI:16651"/>
        <dbReference type="ChEBI" id="CHEBI:57540"/>
        <dbReference type="ChEBI" id="CHEBI:57945"/>
        <dbReference type="EC" id="1.1.1.27"/>
    </reaction>
</comment>
<comment type="activity regulation">
    <text evidence="1">Allosterically activated by fructose 1,6-bisphosphate (FBP).</text>
</comment>
<comment type="pathway">
    <text evidence="1">Fermentation; pyruvate fermentation to lactate; (S)-lactate from pyruvate: step 1/1.</text>
</comment>
<comment type="subunit">
    <text evidence="1">Homotetramer.</text>
</comment>
<comment type="subcellular location">
    <subcellularLocation>
        <location evidence="1">Cytoplasm</location>
    </subcellularLocation>
</comment>
<comment type="similarity">
    <text evidence="1">Belongs to the LDH/MDH superfamily. LDH family.</text>
</comment>